<dbReference type="EMBL" id="CP000095">
    <property type="protein sequence ID" value="AAZ58473.1"/>
    <property type="molecule type" value="Genomic_DNA"/>
</dbReference>
<dbReference type="RefSeq" id="WP_011295329.1">
    <property type="nucleotide sequence ID" value="NC_007335.2"/>
</dbReference>
<dbReference type="SMR" id="Q46J55"/>
<dbReference type="STRING" id="59920.PMN2A_0983"/>
<dbReference type="KEGG" id="pmn:PMN2A_0983"/>
<dbReference type="HOGENOM" id="CLU_079215_8_1_3"/>
<dbReference type="OrthoDB" id="461217at2"/>
<dbReference type="PhylomeDB" id="Q46J55"/>
<dbReference type="Proteomes" id="UP000002535">
    <property type="component" value="Chromosome"/>
</dbReference>
<dbReference type="GO" id="GO:0031676">
    <property type="term" value="C:plasma membrane-derived thylakoid membrane"/>
    <property type="evidence" value="ECO:0007669"/>
    <property type="project" value="UniProtKB-SubCell"/>
</dbReference>
<dbReference type="GO" id="GO:0045259">
    <property type="term" value="C:proton-transporting ATP synthase complex"/>
    <property type="evidence" value="ECO:0007669"/>
    <property type="project" value="UniProtKB-KW"/>
</dbReference>
<dbReference type="GO" id="GO:0046933">
    <property type="term" value="F:proton-transporting ATP synthase activity, rotational mechanism"/>
    <property type="evidence" value="ECO:0007669"/>
    <property type="project" value="UniProtKB-UniRule"/>
</dbReference>
<dbReference type="CDD" id="cd06503">
    <property type="entry name" value="ATP-synt_Fo_b"/>
    <property type="match status" value="1"/>
</dbReference>
<dbReference type="Gene3D" id="1.20.5.620">
    <property type="entry name" value="F1F0 ATP synthase subunit B, membrane domain"/>
    <property type="match status" value="1"/>
</dbReference>
<dbReference type="HAMAP" id="MF_01398">
    <property type="entry name" value="ATP_synth_b_bprime"/>
    <property type="match status" value="1"/>
</dbReference>
<dbReference type="InterPro" id="IPR028987">
    <property type="entry name" value="ATP_synth_B-like_membr_sf"/>
</dbReference>
<dbReference type="InterPro" id="IPR002146">
    <property type="entry name" value="ATP_synth_b/b'su_bac/chlpt"/>
</dbReference>
<dbReference type="InterPro" id="IPR005864">
    <property type="entry name" value="ATP_synth_F0_bsu_bac"/>
</dbReference>
<dbReference type="NCBIfam" id="TIGR01144">
    <property type="entry name" value="ATP_synt_b"/>
    <property type="match status" value="1"/>
</dbReference>
<dbReference type="NCBIfam" id="NF005606">
    <property type="entry name" value="PRK07352.1"/>
    <property type="match status" value="1"/>
</dbReference>
<dbReference type="PANTHER" id="PTHR34264">
    <property type="entry name" value="ATP SYNTHASE SUBUNIT B, CHLOROPLASTIC"/>
    <property type="match status" value="1"/>
</dbReference>
<dbReference type="PANTHER" id="PTHR34264:SF3">
    <property type="entry name" value="ATP SYNTHASE SUBUNIT B, CHLOROPLASTIC"/>
    <property type="match status" value="1"/>
</dbReference>
<dbReference type="Pfam" id="PF00430">
    <property type="entry name" value="ATP-synt_B"/>
    <property type="match status" value="1"/>
</dbReference>
<dbReference type="SUPFAM" id="SSF81573">
    <property type="entry name" value="F1F0 ATP synthase subunit B, membrane domain"/>
    <property type="match status" value="1"/>
</dbReference>
<evidence type="ECO:0000255" key="1">
    <source>
        <dbReference type="HAMAP-Rule" id="MF_01398"/>
    </source>
</evidence>
<sequence length="170" mass="18854">MTPLIFASEGFGLNLNIFETNIINLAVVVFGLYKFLPGFLGKILEKRRTTILSDLKEAEERLAQAQDSLSQAKDDLSSAKQKADKIRNDCKVRAEAIRLESEKRTVEEMARIKQGAASDLSAEAARVTSQLRKEAAELAIEKALAMLPKKLDSNTQDNFLKQSIKNIGDN</sequence>
<reference key="1">
    <citation type="journal article" date="2007" name="PLoS Genet.">
        <title>Patterns and implications of gene gain and loss in the evolution of Prochlorococcus.</title>
        <authorList>
            <person name="Kettler G.C."/>
            <person name="Martiny A.C."/>
            <person name="Huang K."/>
            <person name="Zucker J."/>
            <person name="Coleman M.L."/>
            <person name="Rodrigue S."/>
            <person name="Chen F."/>
            <person name="Lapidus A."/>
            <person name="Ferriera S."/>
            <person name="Johnson J."/>
            <person name="Steglich C."/>
            <person name="Church G.M."/>
            <person name="Richardson P."/>
            <person name="Chisholm S.W."/>
        </authorList>
    </citation>
    <scope>NUCLEOTIDE SEQUENCE [LARGE SCALE GENOMIC DNA]</scope>
    <source>
        <strain>NATL2A</strain>
    </source>
</reference>
<organism>
    <name type="scientific">Prochlorococcus marinus (strain NATL2A)</name>
    <dbReference type="NCBI Taxonomy" id="59920"/>
    <lineage>
        <taxon>Bacteria</taxon>
        <taxon>Bacillati</taxon>
        <taxon>Cyanobacteriota</taxon>
        <taxon>Cyanophyceae</taxon>
        <taxon>Synechococcales</taxon>
        <taxon>Prochlorococcaceae</taxon>
        <taxon>Prochlorococcus</taxon>
    </lineage>
</organism>
<gene>
    <name evidence="1" type="primary">atpF</name>
    <name type="ordered locus">PMN2A_0983</name>
</gene>
<comment type="function">
    <text evidence="1">F(1)F(0) ATP synthase produces ATP from ADP in the presence of a proton or sodium gradient. F-type ATPases consist of two structural domains, F(1) containing the extramembraneous catalytic core and F(0) containing the membrane proton channel, linked together by a central stalk and a peripheral stalk. During catalysis, ATP synthesis in the catalytic domain of F(1) is coupled via a rotary mechanism of the central stalk subunits to proton translocation.</text>
</comment>
<comment type="function">
    <text evidence="1">Component of the F(0) channel, it forms part of the peripheral stalk, linking F(1) to F(0).</text>
</comment>
<comment type="subunit">
    <text evidence="1">F-type ATPases have 2 components, F(1) - the catalytic core - and F(0) - the membrane proton channel. F(1) has five subunits: alpha(3), beta(3), gamma(1), delta(1), epsilon(1). F(0) has four main subunits: a(1), b(1), b'(1) and c(10-14). The alpha and beta chains form an alternating ring which encloses part of the gamma chain. F(1) is attached to F(0) by a central stalk formed by the gamma and epsilon chains, while a peripheral stalk is formed by the delta, b and b' chains.</text>
</comment>
<comment type="subcellular location">
    <subcellularLocation>
        <location evidence="1">Cellular thylakoid membrane</location>
        <topology evidence="1">Single-pass membrane protein</topology>
    </subcellularLocation>
</comment>
<comment type="similarity">
    <text evidence="1">Belongs to the ATPase B chain family.</text>
</comment>
<name>ATPF_PROMT</name>
<keyword id="KW-0066">ATP synthesis</keyword>
<keyword id="KW-0138">CF(0)</keyword>
<keyword id="KW-0375">Hydrogen ion transport</keyword>
<keyword id="KW-0406">Ion transport</keyword>
<keyword id="KW-0472">Membrane</keyword>
<keyword id="KW-1185">Reference proteome</keyword>
<keyword id="KW-0793">Thylakoid</keyword>
<keyword id="KW-0812">Transmembrane</keyword>
<keyword id="KW-1133">Transmembrane helix</keyword>
<keyword id="KW-0813">Transport</keyword>
<accession>Q46J55</accession>
<proteinExistence type="inferred from homology"/>
<feature type="chain" id="PRO_0000368672" description="ATP synthase subunit b">
    <location>
        <begin position="1"/>
        <end position="170"/>
    </location>
</feature>
<feature type="transmembrane region" description="Helical" evidence="1">
    <location>
        <begin position="22"/>
        <end position="44"/>
    </location>
</feature>
<protein>
    <recommendedName>
        <fullName evidence="1">ATP synthase subunit b</fullName>
    </recommendedName>
    <alternativeName>
        <fullName evidence="1">ATP synthase F(0) sector subunit b</fullName>
    </alternativeName>
    <alternativeName>
        <fullName evidence="1">ATPase subunit I</fullName>
    </alternativeName>
    <alternativeName>
        <fullName evidence="1">F-type ATPase subunit b</fullName>
        <shortName evidence="1">F-ATPase subunit b</shortName>
    </alternativeName>
</protein>